<keyword id="KW-0903">Direct protein sequencing</keyword>
<keyword id="KW-1015">Disulfide bond</keyword>
<keyword id="KW-0325">Glycoprotein</keyword>
<keyword id="KW-0593">Phospholipase A2 inhibitor</keyword>
<keyword id="KW-0964">Secreted</keyword>
<keyword id="KW-0732">Signal</keyword>
<feature type="signal peptide" evidence="4">
    <location>
        <begin position="1"/>
        <end position="19"/>
    </location>
</feature>
<feature type="chain" id="PRO_0000022998" description="Phospholipase A2 inhibitor gamma subunit B" evidence="9">
    <location>
        <begin position="20"/>
        <end position="200"/>
    </location>
</feature>
<feature type="glycosylation site" description="N-linked (GlcNAc...) asparagine" evidence="3">
    <location>
        <position position="33"/>
    </location>
</feature>
<feature type="disulfide bond" evidence="1">
    <location>
        <begin position="22"/>
        <end position="46"/>
    </location>
</feature>
<feature type="disulfide bond" evidence="1">
    <location>
        <begin position="25"/>
        <end position="32"/>
    </location>
</feature>
<feature type="disulfide bond" evidence="1">
    <location>
        <begin position="39"/>
        <end position="67"/>
    </location>
</feature>
<feature type="disulfide bond" evidence="1">
    <location>
        <begin position="73"/>
        <end position="94"/>
    </location>
</feature>
<feature type="disulfide bond" evidence="1">
    <location>
        <begin position="95"/>
        <end position="100"/>
    </location>
</feature>
<feature type="disulfide bond" evidence="1">
    <location>
        <begin position="120"/>
        <end position="145"/>
    </location>
</feature>
<feature type="disulfide bond" evidence="1">
    <location>
        <begin position="138"/>
        <end position="165"/>
    </location>
</feature>
<feature type="disulfide bond" evidence="1">
    <location>
        <begin position="171"/>
        <end position="191"/>
    </location>
</feature>
<sequence length="200" mass="22232">MKSFLFCCLLGTFLAIGMCLECEVCMQPGKRCNGSMMTCKDNEDTCVMFQTEVIRAPLSFTFTSKMCSTSDTCHLDYVETNLPYELAVRSRRACCVGDECKTMPPVVLEHHDNRYNGLHCPGCIGFGSHECNEKLVSCRDTENQCLSLIGKNFDFVADDITIKGCATESLCSLLQKKIFSAIGEFDLDVKCTPVFPQSSQ</sequence>
<organism>
    <name type="scientific">Gloydius brevicaudus siniticus</name>
    <name type="common">Chinese mamushi</name>
    <name type="synonym">Agkistrodon blomhoffii siniticus</name>
    <dbReference type="NCBI Taxonomy" id="31147"/>
    <lineage>
        <taxon>Eukaryota</taxon>
        <taxon>Metazoa</taxon>
        <taxon>Chordata</taxon>
        <taxon>Craniata</taxon>
        <taxon>Vertebrata</taxon>
        <taxon>Euteleostomi</taxon>
        <taxon>Lepidosauria</taxon>
        <taxon>Squamata</taxon>
        <taxon>Bifurcata</taxon>
        <taxon>Unidentata</taxon>
        <taxon>Episquamata</taxon>
        <taxon>Toxicofera</taxon>
        <taxon>Serpentes</taxon>
        <taxon>Colubroidea</taxon>
        <taxon>Viperidae</taxon>
        <taxon>Crotalinae</taxon>
        <taxon>Gloydius</taxon>
        <taxon>Gloydius brevicauda</taxon>
    </lineage>
</organism>
<reference key="1">
    <citation type="journal article" date="1999" name="IUBMB Life">
        <title>cDNA cloning of the two subunits of a phospholipase A2 inhibitor PLIgamma from blood plasma of the Chinese mamushi, Agkistrodon blomhoffii siniticus.</title>
        <authorList>
            <person name="Okumura K."/>
            <person name="Inoue S."/>
            <person name="Ohkura N."/>
            <person name="Ikeda K."/>
            <person name="Hayashi K."/>
        </authorList>
    </citation>
    <scope>NUCLEOTIDE SEQUENCE [MRNA]</scope>
    <source>
        <tissue>Liver</tissue>
    </source>
</reference>
<reference key="2">
    <citation type="journal article" date="1997" name="Biochem. J.">
        <title>Purification and characterization of three distinct types of phospholipase A2 inhibitors from the blood plasma of the Chinese mamushi, Agkistrodon blomhoffii siniticus.</title>
        <authorList>
            <person name="Ohkura N."/>
            <person name="Okuhara H."/>
            <person name="Inoue S."/>
            <person name="Ikeda K."/>
            <person name="Hayashi K."/>
        </authorList>
    </citation>
    <scope>PROTEIN SEQUENCE OF 20-49</scope>
    <scope>SUBCELLULAR LOCATION</scope>
    <source>
        <tissue>Plasma</tissue>
    </source>
</reference>
<evidence type="ECO:0000250" key="1">
    <source>
        <dbReference type="UniProtKB" id="Q7LZI2"/>
    </source>
</evidence>
<evidence type="ECO:0000250" key="2">
    <source>
        <dbReference type="UniProtKB" id="Q9PWI3"/>
    </source>
</evidence>
<evidence type="ECO:0000255" key="3"/>
<evidence type="ECO:0000269" key="4">
    <source>
    </source>
</evidence>
<evidence type="ECO:0000303" key="5">
    <source>
    </source>
</evidence>
<evidence type="ECO:0000303" key="6">
    <source>
    </source>
</evidence>
<evidence type="ECO:0000305" key="7"/>
<evidence type="ECO:0000305" key="8">
    <source>
    </source>
</evidence>
<evidence type="ECO:0000305" key="9">
    <source>
    </source>
</evidence>
<protein>
    <recommendedName>
        <fullName>Phospholipase A2 inhibitor gamma subunit B</fullName>
        <shortName evidence="5">gamma-PLI B</shortName>
    </recommendedName>
    <alternativeName>
        <fullName evidence="6">PLI-gamma</fullName>
    </alternativeName>
    <alternativeName>
        <fullName evidence="5">Phospholipase A2 inhibitor gamma 20 kDa subunit</fullName>
    </alternativeName>
</protein>
<proteinExistence type="evidence at protein level"/>
<accession>P82143</accession>
<accession>Q9I850</accession>
<name>PLIGB_GLOBS</name>
<comment type="function">
    <text>Inhibits the enzymatic activity of phospholipase A2 (PA2).</text>
</comment>
<comment type="subunit">
    <text evidence="2">Heterodimer of subunit A and subunit B.</text>
</comment>
<comment type="subcellular location">
    <subcellularLocation>
        <location evidence="4">Secreted</location>
    </subcellularLocation>
    <text evidence="4">Secreted in blood plasma.</text>
</comment>
<comment type="tissue specificity">
    <text evidence="8">Expressed by the liver.</text>
</comment>
<comment type="similarity">
    <text evidence="7">Belongs to the CNF-like-inhibitor family.</text>
</comment>
<dbReference type="EMBL" id="AB018373">
    <property type="protein sequence ID" value="BAA86971.1"/>
    <property type="molecule type" value="mRNA"/>
</dbReference>
<dbReference type="SMR" id="P82143"/>
<dbReference type="GO" id="GO:0005576">
    <property type="term" value="C:extracellular region"/>
    <property type="evidence" value="ECO:0007669"/>
    <property type="project" value="UniProtKB-SubCell"/>
</dbReference>
<dbReference type="GO" id="GO:0019834">
    <property type="term" value="F:phospholipase A2 inhibitor activity"/>
    <property type="evidence" value="ECO:0007669"/>
    <property type="project" value="UniProtKB-KW"/>
</dbReference>
<dbReference type="CDD" id="cd23572">
    <property type="entry name" value="TFP_LU_ECD_PINLYP_rpt2"/>
    <property type="match status" value="1"/>
</dbReference>
<dbReference type="CDD" id="cd23630">
    <property type="entry name" value="TFP_LU_ECD_PLIGB"/>
    <property type="match status" value="1"/>
</dbReference>
<dbReference type="Gene3D" id="2.10.60.10">
    <property type="entry name" value="CD59"/>
    <property type="match status" value="2"/>
</dbReference>
<dbReference type="InterPro" id="IPR050918">
    <property type="entry name" value="CNF-like_PLA2_Inhibitor"/>
</dbReference>
<dbReference type="InterPro" id="IPR016054">
    <property type="entry name" value="LY6_UPA_recep-like"/>
</dbReference>
<dbReference type="InterPro" id="IPR016338">
    <property type="entry name" value="PLipase_A2-inh_b-type"/>
</dbReference>
<dbReference type="InterPro" id="IPR004126">
    <property type="entry name" value="PLipase_A2_inh_N"/>
</dbReference>
<dbReference type="InterPro" id="IPR045860">
    <property type="entry name" value="Snake_toxin-like_sf"/>
</dbReference>
<dbReference type="PANTHER" id="PTHR20914">
    <property type="entry name" value="LY6/PLAUR DOMAIN-CONTAINING PROTEIN 8"/>
    <property type="match status" value="1"/>
</dbReference>
<dbReference type="PANTHER" id="PTHR20914:SF30">
    <property type="entry name" value="LY6_PLAUR DOMAIN CONTAINING 9"/>
    <property type="match status" value="1"/>
</dbReference>
<dbReference type="Pfam" id="PF02988">
    <property type="entry name" value="PLA2_inh"/>
    <property type="match status" value="1"/>
</dbReference>
<dbReference type="Pfam" id="PF00021">
    <property type="entry name" value="UPAR_LY6"/>
    <property type="match status" value="1"/>
</dbReference>
<dbReference type="PIRSF" id="PIRSF002023">
    <property type="entry name" value="PLA2_inhib_alpha/gamma"/>
    <property type="match status" value="1"/>
</dbReference>
<dbReference type="SUPFAM" id="SSF57302">
    <property type="entry name" value="Snake toxin-like"/>
    <property type="match status" value="2"/>
</dbReference>